<evidence type="ECO:0000255" key="1">
    <source>
        <dbReference type="HAMAP-Rule" id="MF_00040"/>
    </source>
</evidence>
<comment type="function">
    <text evidence="1">Responsible for the release of ribosomes from messenger RNA at the termination of protein biosynthesis. May increase the efficiency of translation by recycling ribosomes from one round of translation to another.</text>
</comment>
<comment type="subcellular location">
    <subcellularLocation>
        <location evidence="1">Cytoplasm</location>
    </subcellularLocation>
</comment>
<comment type="similarity">
    <text evidence="1">Belongs to the RRF family.</text>
</comment>
<proteinExistence type="inferred from homology"/>
<sequence>MGTIADDILDDLHGRILKTLDQLRTELAAVRTGRASLHLLDNVRVDYYGTPTPLNQVATLSVPEARLIVVKPWEKSMIPPIEKAIRDGNLGLNPMSDKDLVRVPIPALTEERRKEIVKQVKHKGEEHKIAVRNVRREAKELIEVAEKDGDISGDDAEKALEKMQKETDDGVKKIDEIVAAKEKDVLQV</sequence>
<reference key="1">
    <citation type="submission" date="2009-01" db="EMBL/GenBank/DDBJ databases">
        <title>Complete sequence of Anaeromyxobacter dehalogenans 2CP-1.</title>
        <authorList>
            <person name="Lucas S."/>
            <person name="Copeland A."/>
            <person name="Lapidus A."/>
            <person name="Glavina del Rio T."/>
            <person name="Dalin E."/>
            <person name="Tice H."/>
            <person name="Bruce D."/>
            <person name="Goodwin L."/>
            <person name="Pitluck S."/>
            <person name="Saunders E."/>
            <person name="Brettin T."/>
            <person name="Detter J.C."/>
            <person name="Han C."/>
            <person name="Larimer F."/>
            <person name="Land M."/>
            <person name="Hauser L."/>
            <person name="Kyrpides N."/>
            <person name="Ovchinnikova G."/>
            <person name="Beliaev A.S."/>
            <person name="Richardson P."/>
        </authorList>
    </citation>
    <scope>NUCLEOTIDE SEQUENCE [LARGE SCALE GENOMIC DNA]</scope>
    <source>
        <strain>2CP-1 / ATCC BAA-258</strain>
    </source>
</reference>
<name>RRF_ANAD2</name>
<keyword id="KW-0963">Cytoplasm</keyword>
<keyword id="KW-0648">Protein biosynthesis</keyword>
<feature type="chain" id="PRO_1000194890" description="Ribosome-recycling factor">
    <location>
        <begin position="1"/>
        <end position="188"/>
    </location>
</feature>
<gene>
    <name evidence="1" type="primary">frr</name>
    <name type="ordered locus">A2cp1_0303</name>
</gene>
<organism>
    <name type="scientific">Anaeromyxobacter dehalogenans (strain 2CP-1 / ATCC BAA-258)</name>
    <dbReference type="NCBI Taxonomy" id="455488"/>
    <lineage>
        <taxon>Bacteria</taxon>
        <taxon>Pseudomonadati</taxon>
        <taxon>Myxococcota</taxon>
        <taxon>Myxococcia</taxon>
        <taxon>Myxococcales</taxon>
        <taxon>Cystobacterineae</taxon>
        <taxon>Anaeromyxobacteraceae</taxon>
        <taxon>Anaeromyxobacter</taxon>
    </lineage>
</organism>
<protein>
    <recommendedName>
        <fullName evidence="1">Ribosome-recycling factor</fullName>
        <shortName evidence="1">RRF</shortName>
    </recommendedName>
    <alternativeName>
        <fullName evidence="1">Ribosome-releasing factor</fullName>
    </alternativeName>
</protein>
<accession>B8J9V9</accession>
<dbReference type="EMBL" id="CP001359">
    <property type="protein sequence ID" value="ACL63662.1"/>
    <property type="molecule type" value="Genomic_DNA"/>
</dbReference>
<dbReference type="RefSeq" id="WP_012631718.1">
    <property type="nucleotide sequence ID" value="NC_011891.1"/>
</dbReference>
<dbReference type="SMR" id="B8J9V9"/>
<dbReference type="KEGG" id="acp:A2cp1_0303"/>
<dbReference type="HOGENOM" id="CLU_073981_2_0_7"/>
<dbReference type="Proteomes" id="UP000007089">
    <property type="component" value="Chromosome"/>
</dbReference>
<dbReference type="GO" id="GO:0005829">
    <property type="term" value="C:cytosol"/>
    <property type="evidence" value="ECO:0007669"/>
    <property type="project" value="GOC"/>
</dbReference>
<dbReference type="GO" id="GO:0043023">
    <property type="term" value="F:ribosomal large subunit binding"/>
    <property type="evidence" value="ECO:0007669"/>
    <property type="project" value="TreeGrafter"/>
</dbReference>
<dbReference type="GO" id="GO:0002184">
    <property type="term" value="P:cytoplasmic translational termination"/>
    <property type="evidence" value="ECO:0007669"/>
    <property type="project" value="TreeGrafter"/>
</dbReference>
<dbReference type="CDD" id="cd00520">
    <property type="entry name" value="RRF"/>
    <property type="match status" value="1"/>
</dbReference>
<dbReference type="FunFam" id="1.10.132.20:FF:000001">
    <property type="entry name" value="Ribosome-recycling factor"/>
    <property type="match status" value="1"/>
</dbReference>
<dbReference type="FunFam" id="3.30.1360.40:FF:000001">
    <property type="entry name" value="Ribosome-recycling factor"/>
    <property type="match status" value="1"/>
</dbReference>
<dbReference type="Gene3D" id="3.30.1360.40">
    <property type="match status" value="1"/>
</dbReference>
<dbReference type="Gene3D" id="1.10.132.20">
    <property type="entry name" value="Ribosome-recycling factor"/>
    <property type="match status" value="1"/>
</dbReference>
<dbReference type="HAMAP" id="MF_00040">
    <property type="entry name" value="RRF"/>
    <property type="match status" value="1"/>
</dbReference>
<dbReference type="InterPro" id="IPR002661">
    <property type="entry name" value="Ribosome_recyc_fac"/>
</dbReference>
<dbReference type="InterPro" id="IPR023584">
    <property type="entry name" value="Ribosome_recyc_fac_dom"/>
</dbReference>
<dbReference type="InterPro" id="IPR036191">
    <property type="entry name" value="RRF_sf"/>
</dbReference>
<dbReference type="NCBIfam" id="TIGR00496">
    <property type="entry name" value="frr"/>
    <property type="match status" value="1"/>
</dbReference>
<dbReference type="PANTHER" id="PTHR20982:SF3">
    <property type="entry name" value="MITOCHONDRIAL RIBOSOME RECYCLING FACTOR PSEUDO 1"/>
    <property type="match status" value="1"/>
</dbReference>
<dbReference type="PANTHER" id="PTHR20982">
    <property type="entry name" value="RIBOSOME RECYCLING FACTOR"/>
    <property type="match status" value="1"/>
</dbReference>
<dbReference type="Pfam" id="PF01765">
    <property type="entry name" value="RRF"/>
    <property type="match status" value="1"/>
</dbReference>
<dbReference type="SUPFAM" id="SSF55194">
    <property type="entry name" value="Ribosome recycling factor, RRF"/>
    <property type="match status" value="1"/>
</dbReference>